<protein>
    <recommendedName>
        <fullName evidence="1">Chaperone protein HscA</fullName>
    </recommendedName>
    <alternativeName>
        <fullName evidence="1">Hsc66</fullName>
    </alternativeName>
</protein>
<gene>
    <name evidence="1" type="primary">hscA</name>
    <name type="ordered locus">NT01EI_3179</name>
</gene>
<organism>
    <name type="scientific">Edwardsiella ictaluri (strain 93-146)</name>
    <dbReference type="NCBI Taxonomy" id="634503"/>
    <lineage>
        <taxon>Bacteria</taxon>
        <taxon>Pseudomonadati</taxon>
        <taxon>Pseudomonadota</taxon>
        <taxon>Gammaproteobacteria</taxon>
        <taxon>Enterobacterales</taxon>
        <taxon>Hafniaceae</taxon>
        <taxon>Edwardsiella</taxon>
    </lineage>
</organism>
<dbReference type="EMBL" id="CP001600">
    <property type="protein sequence ID" value="ACR70329.1"/>
    <property type="molecule type" value="Genomic_DNA"/>
</dbReference>
<dbReference type="RefSeq" id="WP_015872417.1">
    <property type="nucleotide sequence ID" value="NZ_CP169062.1"/>
</dbReference>
<dbReference type="SMR" id="C5BEU1"/>
<dbReference type="STRING" id="67780.B6E78_07555"/>
<dbReference type="GeneID" id="69540047"/>
<dbReference type="KEGG" id="eic:NT01EI_3179"/>
<dbReference type="PATRIC" id="fig|634503.3.peg.2840"/>
<dbReference type="HOGENOM" id="CLU_005965_2_1_6"/>
<dbReference type="OrthoDB" id="9766019at2"/>
<dbReference type="Proteomes" id="UP000001485">
    <property type="component" value="Chromosome"/>
</dbReference>
<dbReference type="GO" id="GO:0005524">
    <property type="term" value="F:ATP binding"/>
    <property type="evidence" value="ECO:0007669"/>
    <property type="project" value="UniProtKB-KW"/>
</dbReference>
<dbReference type="GO" id="GO:0016887">
    <property type="term" value="F:ATP hydrolysis activity"/>
    <property type="evidence" value="ECO:0007669"/>
    <property type="project" value="UniProtKB-UniRule"/>
</dbReference>
<dbReference type="GO" id="GO:0140662">
    <property type="term" value="F:ATP-dependent protein folding chaperone"/>
    <property type="evidence" value="ECO:0007669"/>
    <property type="project" value="InterPro"/>
</dbReference>
<dbReference type="GO" id="GO:0051082">
    <property type="term" value="F:unfolded protein binding"/>
    <property type="evidence" value="ECO:0007669"/>
    <property type="project" value="InterPro"/>
</dbReference>
<dbReference type="GO" id="GO:0016226">
    <property type="term" value="P:iron-sulfur cluster assembly"/>
    <property type="evidence" value="ECO:0007669"/>
    <property type="project" value="InterPro"/>
</dbReference>
<dbReference type="CDD" id="cd10236">
    <property type="entry name" value="ASKHA_NBD_HSP70_HscA"/>
    <property type="match status" value="1"/>
</dbReference>
<dbReference type="FunFam" id="3.30.420.40:FF:000046">
    <property type="entry name" value="Chaperone protein HscA"/>
    <property type="match status" value="1"/>
</dbReference>
<dbReference type="FunFam" id="2.60.34.10:FF:000005">
    <property type="entry name" value="Chaperone protein HscA homolog"/>
    <property type="match status" value="1"/>
</dbReference>
<dbReference type="Gene3D" id="1.20.1270.10">
    <property type="match status" value="1"/>
</dbReference>
<dbReference type="Gene3D" id="3.30.420.40">
    <property type="match status" value="2"/>
</dbReference>
<dbReference type="Gene3D" id="3.90.640.10">
    <property type="entry name" value="Actin, Chain A, domain 4"/>
    <property type="match status" value="1"/>
</dbReference>
<dbReference type="Gene3D" id="2.60.34.10">
    <property type="entry name" value="Substrate Binding Domain Of DNAk, Chain A, domain 1"/>
    <property type="match status" value="1"/>
</dbReference>
<dbReference type="HAMAP" id="MF_00679">
    <property type="entry name" value="HscA"/>
    <property type="match status" value="1"/>
</dbReference>
<dbReference type="InterPro" id="IPR043129">
    <property type="entry name" value="ATPase_NBD"/>
</dbReference>
<dbReference type="InterPro" id="IPR018181">
    <property type="entry name" value="Heat_shock_70_CS"/>
</dbReference>
<dbReference type="InterPro" id="IPR042039">
    <property type="entry name" value="HscA_NBD"/>
</dbReference>
<dbReference type="InterPro" id="IPR029048">
    <property type="entry name" value="HSP70_C_sf"/>
</dbReference>
<dbReference type="InterPro" id="IPR029047">
    <property type="entry name" value="HSP70_peptide-bd_sf"/>
</dbReference>
<dbReference type="InterPro" id="IPR013126">
    <property type="entry name" value="Hsp_70_fam"/>
</dbReference>
<dbReference type="InterPro" id="IPR010236">
    <property type="entry name" value="ISC_FeS_clus_asmbl_HscA"/>
</dbReference>
<dbReference type="NCBIfam" id="TIGR01991">
    <property type="entry name" value="HscA"/>
    <property type="match status" value="1"/>
</dbReference>
<dbReference type="NCBIfam" id="NF003520">
    <property type="entry name" value="PRK05183.1"/>
    <property type="match status" value="1"/>
</dbReference>
<dbReference type="PANTHER" id="PTHR19375">
    <property type="entry name" value="HEAT SHOCK PROTEIN 70KDA"/>
    <property type="match status" value="1"/>
</dbReference>
<dbReference type="Pfam" id="PF00012">
    <property type="entry name" value="HSP70"/>
    <property type="match status" value="1"/>
</dbReference>
<dbReference type="PRINTS" id="PR00301">
    <property type="entry name" value="HEATSHOCK70"/>
</dbReference>
<dbReference type="SUPFAM" id="SSF53067">
    <property type="entry name" value="Actin-like ATPase domain"/>
    <property type="match status" value="2"/>
</dbReference>
<dbReference type="SUPFAM" id="SSF100934">
    <property type="entry name" value="Heat shock protein 70kD (HSP70), C-terminal subdomain"/>
    <property type="match status" value="1"/>
</dbReference>
<dbReference type="SUPFAM" id="SSF100920">
    <property type="entry name" value="Heat shock protein 70kD (HSP70), peptide-binding domain"/>
    <property type="match status" value="1"/>
</dbReference>
<dbReference type="PROSITE" id="PS00297">
    <property type="entry name" value="HSP70_1"/>
    <property type="match status" value="1"/>
</dbReference>
<dbReference type="PROSITE" id="PS00329">
    <property type="entry name" value="HSP70_2"/>
    <property type="match status" value="1"/>
</dbReference>
<dbReference type="PROSITE" id="PS01036">
    <property type="entry name" value="HSP70_3"/>
    <property type="match status" value="1"/>
</dbReference>
<evidence type="ECO:0000255" key="1">
    <source>
        <dbReference type="HAMAP-Rule" id="MF_00679"/>
    </source>
</evidence>
<proteinExistence type="inferred from homology"/>
<name>HSCA_EDWI9</name>
<comment type="function">
    <text evidence="1">Chaperone involved in the maturation of iron-sulfur cluster-containing proteins. Has a low intrinsic ATPase activity which is markedly stimulated by HscB. Involved in the maturation of IscU.</text>
</comment>
<comment type="similarity">
    <text evidence="1">Belongs to the heat shock protein 70 family.</text>
</comment>
<feature type="chain" id="PRO_1000212529" description="Chaperone protein HscA">
    <location>
        <begin position="1"/>
        <end position="616"/>
    </location>
</feature>
<reference key="1">
    <citation type="submission" date="2009-03" db="EMBL/GenBank/DDBJ databases">
        <title>Complete genome sequence of Edwardsiella ictaluri 93-146.</title>
        <authorList>
            <person name="Williams M.L."/>
            <person name="Gillaspy A.F."/>
            <person name="Dyer D.W."/>
            <person name="Thune R.L."/>
            <person name="Waldbieser G.C."/>
            <person name="Schuster S.C."/>
            <person name="Gipson J."/>
            <person name="Zaitshik J."/>
            <person name="Landry C."/>
            <person name="Lawrence M.L."/>
        </authorList>
    </citation>
    <scope>NUCLEOTIDE SEQUENCE [LARGE SCALE GENOMIC DNA]</scope>
    <source>
        <strain>93-146</strain>
    </source>
</reference>
<sequence>MALLQISEPGLSAAPHQRRLAAGIDLGTTNSLVATVRSGQAETLADEQGHHLLPSVVRYQAGGHIVGAEAREQAADDPLNTVSSIKRMMGRSLADVQARYPHLPYQMHASESGMPQLATAAGSVNPIQVSADILAALSARAQAALGGELDGVVITVPAYFDDAQRQGTKDAARLAGLHVLRLLNEPTAAAIAYGLDSAQEGVIAVYDLGGGTFDISILRLSRGVFEVLATGGDSALGGDDFDHLLADWLREQAGLRDRSDAGLARRFLDAAVAAKIALSTQQETTVCVGDWQGEVSRDQLDALIAPLVKRTLLACHRTLKDAGVTRDEVLEVVMVGGSTRVPLVRTQVGDFFGRQPLTTIDPDRVVAIGAAIQADILVGNKPDADMLLLDVIPLSLGLETMGGLVEKVIPRNTTIPVARAQEFTTFKDGQTAMMIHVLQGERELVQDNRSLARFTLRGIPPLSAGGAHIRVTFQVDADGLLSVTAMEKSTGVQAAIQVKPSYGLSEDEIVGMLKDSMANAEGDLSARMLAEQKVEAARVLESLHGALQQDSALLGEQELAAIRQAQTALQAAADGDETSAIEAAIKVLDAQTQEFAARRMDSSIRRALAGHSVDEV</sequence>
<keyword id="KW-0067">ATP-binding</keyword>
<keyword id="KW-0143">Chaperone</keyword>
<keyword id="KW-0547">Nucleotide-binding</keyword>
<accession>C5BEU1</accession>